<dbReference type="EMBL" id="X01461">
    <property type="protein sequence ID" value="CAA25695.1"/>
    <property type="molecule type" value="mRNA"/>
</dbReference>
<dbReference type="PIR" id="S08613">
    <property type="entry name" value="S08613"/>
</dbReference>
<dbReference type="SMR" id="P05785"/>
<dbReference type="FunCoup" id="P05785">
    <property type="interactions" value="151"/>
</dbReference>
<dbReference type="PaxDb" id="9913-ENSBTAP00000036252"/>
<dbReference type="PeptideAtlas" id="P05785"/>
<dbReference type="eggNOG" id="ENOG502R8V7">
    <property type="taxonomic scope" value="Eukaryota"/>
</dbReference>
<dbReference type="InParanoid" id="P05785"/>
<dbReference type="OrthoDB" id="2441647at2759"/>
<dbReference type="Proteomes" id="UP000009136">
    <property type="component" value="Unplaced"/>
</dbReference>
<dbReference type="GO" id="GO:0005737">
    <property type="term" value="C:cytoplasm"/>
    <property type="evidence" value="ECO:0000250"/>
    <property type="project" value="UniProtKB"/>
</dbReference>
<dbReference type="GO" id="GO:0005882">
    <property type="term" value="C:intermediate filament"/>
    <property type="evidence" value="ECO:0007669"/>
    <property type="project" value="UniProtKB-KW"/>
</dbReference>
<dbReference type="GO" id="GO:0005634">
    <property type="term" value="C:nucleus"/>
    <property type="evidence" value="ECO:0000250"/>
    <property type="project" value="UniProtKB"/>
</dbReference>
<dbReference type="GO" id="GO:0005198">
    <property type="term" value="F:structural molecule activity"/>
    <property type="evidence" value="ECO:0007669"/>
    <property type="project" value="InterPro"/>
</dbReference>
<dbReference type="GO" id="GO:0045110">
    <property type="term" value="P:intermediate filament bundle assembly"/>
    <property type="evidence" value="ECO:0000250"/>
    <property type="project" value="UniProtKB"/>
</dbReference>
<dbReference type="FunFam" id="1.20.5.170:FF:000002">
    <property type="entry name" value="Type I keratin KA11"/>
    <property type="match status" value="1"/>
</dbReference>
<dbReference type="Gene3D" id="1.20.5.170">
    <property type="match status" value="1"/>
</dbReference>
<dbReference type="InterPro" id="IPR018039">
    <property type="entry name" value="IF_conserved"/>
</dbReference>
<dbReference type="InterPro" id="IPR039008">
    <property type="entry name" value="IF_rod_dom"/>
</dbReference>
<dbReference type="InterPro" id="IPR002957">
    <property type="entry name" value="Keratin_I"/>
</dbReference>
<dbReference type="PANTHER" id="PTHR23239">
    <property type="entry name" value="INTERMEDIATE FILAMENT"/>
    <property type="match status" value="1"/>
</dbReference>
<dbReference type="PANTHER" id="PTHR23239:SF368">
    <property type="entry name" value="KERATIN, TYPE I CYTOSKELETAL 14"/>
    <property type="match status" value="1"/>
</dbReference>
<dbReference type="Pfam" id="PF00038">
    <property type="entry name" value="Filament"/>
    <property type="match status" value="1"/>
</dbReference>
<dbReference type="SUPFAM" id="SSF64593">
    <property type="entry name" value="Intermediate filament protein, coiled coil region"/>
    <property type="match status" value="1"/>
</dbReference>
<dbReference type="PROSITE" id="PS00226">
    <property type="entry name" value="IF_ROD_1"/>
    <property type="match status" value="1"/>
</dbReference>
<dbReference type="PROSITE" id="PS51842">
    <property type="entry name" value="IF_ROD_2"/>
    <property type="match status" value="1"/>
</dbReference>
<name>K1C14_BOVIN</name>
<accession>P05785</accession>
<protein>
    <recommendedName>
        <fullName>Keratin, type I cytoskeletal 14</fullName>
    </recommendedName>
    <alternativeName>
        <fullName>Cytokeratin VII</fullName>
    </alternativeName>
    <alternativeName>
        <fullName>Cytokeratin-14</fullName>
        <shortName>CK-14</shortName>
    </alternativeName>
    <alternativeName>
        <fullName>Cytokeratin-7</fullName>
    </alternativeName>
    <alternativeName>
        <fullName>Keratin-14</fullName>
        <shortName>K14</shortName>
    </alternativeName>
</protein>
<gene>
    <name type="primary">KRT14</name>
</gene>
<reference key="1">
    <citation type="journal article" date="1984" name="J. Mol. Biol.">
        <title>Identification of two types of keratin polypeptides within the acidic cytokeratin subfamily I.</title>
        <authorList>
            <person name="Jorcano J.L."/>
            <person name="Rieger M."/>
            <person name="Franz J.K."/>
            <person name="Schiller D.L."/>
            <person name="Moll R."/>
            <person name="Franke W.W."/>
        </authorList>
    </citation>
    <scope>NUCLEOTIDE SEQUENCE [MRNA]</scope>
</reference>
<feature type="chain" id="PRO_0000063652" description="Keratin, type I cytoskeletal 14">
    <location>
        <begin position="1" status="less than"/>
        <end position="93"/>
    </location>
</feature>
<feature type="domain" description="IF rod" evidence="4">
    <location>
        <begin position="1" status="less than"/>
        <end position="48"/>
    </location>
</feature>
<feature type="region of interest" description="Coil 2">
    <location>
        <begin position="1" status="less than"/>
        <end position="44"/>
    </location>
</feature>
<feature type="region of interest" description="Tail">
    <location>
        <begin position="45"/>
        <end position="93"/>
    </location>
</feature>
<feature type="region of interest" description="Interaction with Type I keratins and keratin filaments" evidence="1">
    <location>
        <begin position="47"/>
        <end position="93"/>
    </location>
</feature>
<feature type="region of interest" description="Disordered" evidence="5">
    <location>
        <begin position="47"/>
        <end position="69"/>
    </location>
</feature>
<feature type="compositionally biased region" description="Low complexity" evidence="5">
    <location>
        <begin position="49"/>
        <end position="68"/>
    </location>
</feature>
<feature type="modified residue" description="Phosphoserine" evidence="3">
    <location>
        <position position="57"/>
    </location>
</feature>
<feature type="non-terminal residue">
    <location>
        <position position="1"/>
    </location>
</feature>
<sequence>SVEEQLAQLRCEMEQQNQEYKILLDVKTRLEQEIATYRRLLEGEDAHLSSSQFSSGSQSSRDVSSSRQVRTKVVDVHDGKVVFTHEQIVRTKN</sequence>
<evidence type="ECO:0000250" key="1"/>
<evidence type="ECO:0000250" key="2">
    <source>
        <dbReference type="UniProtKB" id="P02533"/>
    </source>
</evidence>
<evidence type="ECO:0000250" key="3">
    <source>
        <dbReference type="UniProtKB" id="Q61781"/>
    </source>
</evidence>
<evidence type="ECO:0000255" key="4">
    <source>
        <dbReference type="PROSITE-ProRule" id="PRU01188"/>
    </source>
</evidence>
<evidence type="ECO:0000256" key="5">
    <source>
        <dbReference type="SAM" id="MobiDB-lite"/>
    </source>
</evidence>
<keyword id="KW-0175">Coiled coil</keyword>
<keyword id="KW-0963">Cytoplasm</keyword>
<keyword id="KW-1015">Disulfide bond</keyword>
<keyword id="KW-0403">Intermediate filament</keyword>
<keyword id="KW-0416">Keratin</keyword>
<keyword id="KW-0539">Nucleus</keyword>
<keyword id="KW-0597">Phosphoprotein</keyword>
<keyword id="KW-1185">Reference proteome</keyword>
<keyword id="KW-0832">Ubl conjugation</keyword>
<organism>
    <name type="scientific">Bos taurus</name>
    <name type="common">Bovine</name>
    <dbReference type="NCBI Taxonomy" id="9913"/>
    <lineage>
        <taxon>Eukaryota</taxon>
        <taxon>Metazoa</taxon>
        <taxon>Chordata</taxon>
        <taxon>Craniata</taxon>
        <taxon>Vertebrata</taxon>
        <taxon>Euteleostomi</taxon>
        <taxon>Mammalia</taxon>
        <taxon>Eutheria</taxon>
        <taxon>Laurasiatheria</taxon>
        <taxon>Artiodactyla</taxon>
        <taxon>Ruminantia</taxon>
        <taxon>Pecora</taxon>
        <taxon>Bovidae</taxon>
        <taxon>Bovinae</taxon>
        <taxon>Bos</taxon>
    </lineage>
</organism>
<proteinExistence type="evidence at transcript level"/>
<comment type="function">
    <text evidence="2">The nonhelical tail domain is involved in promoting KRT5-KRT14 filaments to self-organize into large bundles and enhances the mechanical properties involved in resilience of keratin intermediate filaments in vitro.</text>
</comment>
<comment type="subunit">
    <text evidence="2 3">Heterotetramer of two type I and two type II keratins (By similarity). Forms a disulfide-linked heterodimer (via 2B domains) with KRT5 (via 2B domains) (By similarity). Forms a heterodimer with KRT1; the interaction is more abundant in the absence of KRT5 (By similarity). Interacts with TRADD and with keratin filaments (By similarity). Associates with other type I keratins (By similarity). Interacts with EPPK1 (By similarity). Interacts with KLHL24 (By similarity). Interacts with PKP1 (via N-terminus) and PKP2 (By similarity).</text>
</comment>
<comment type="subcellular location">
    <subcellularLocation>
        <location evidence="2">Cytoplasm</location>
    </subcellularLocation>
    <subcellularLocation>
        <location evidence="2">Nucleus</location>
    </subcellularLocation>
    <text evidence="2">Expressed in both as a filamentous pattern.</text>
</comment>
<comment type="PTM">
    <text evidence="3">A disulfide bond is formed between rather than within filaments and promotes the formation of a keratin filament cage around the nucleus.</text>
</comment>
<comment type="PTM">
    <text evidence="2">Ubiquitinated by the BCR(KLHL24) E3 ubiquitin ligase complex.</text>
</comment>
<comment type="miscellaneous">
    <text>There are two types of cytoskeletal and microfibrillar keratin: I (acidic; 40-55 kDa) and II (neutral to basic; 56-70 kDa).</text>
</comment>
<comment type="similarity">
    <text evidence="4">Belongs to the intermediate filament family.</text>
</comment>